<evidence type="ECO:0000255" key="1"/>
<evidence type="ECO:0000255" key="2">
    <source>
        <dbReference type="PROSITE-ProRule" id="PRU00441"/>
    </source>
</evidence>
<evidence type="ECO:0000256" key="3">
    <source>
        <dbReference type="SAM" id="MobiDB-lite"/>
    </source>
</evidence>
<evidence type="ECO:0000269" key="4">
    <source>
    </source>
</evidence>
<evidence type="ECO:0000303" key="5">
    <source>
    </source>
</evidence>
<evidence type="ECO:0000305" key="6"/>
<evidence type="ECO:0000305" key="7">
    <source>
    </source>
</evidence>
<accession>P48245</accession>
<feature type="chain" id="PRO_0000060043" description="Glutamate transport system permease protein GluD">
    <location>
        <begin position="1"/>
        <end position="273"/>
    </location>
</feature>
<feature type="transmembrane region" description="Helical" evidence="1">
    <location>
        <begin position="26"/>
        <end position="46"/>
    </location>
</feature>
<feature type="transmembrane region" description="Helical" evidence="1">
    <location>
        <begin position="64"/>
        <end position="84"/>
    </location>
</feature>
<feature type="transmembrane region" description="Helical" evidence="1">
    <location>
        <begin position="100"/>
        <end position="120"/>
    </location>
</feature>
<feature type="transmembrane region" description="Helical" evidence="1">
    <location>
        <begin position="150"/>
        <end position="170"/>
    </location>
</feature>
<feature type="transmembrane region" description="Helical" evidence="1">
    <location>
        <begin position="200"/>
        <end position="220"/>
    </location>
</feature>
<feature type="domain" description="ABC transmembrane type-1" evidence="2">
    <location>
        <begin position="30"/>
        <end position="221"/>
    </location>
</feature>
<feature type="region of interest" description="Disordered" evidence="3">
    <location>
        <begin position="242"/>
        <end position="273"/>
    </location>
</feature>
<feature type="compositionally biased region" description="Basic and acidic residues" evidence="3">
    <location>
        <begin position="262"/>
        <end position="273"/>
    </location>
</feature>
<feature type="sequence conflict" description="In Ref. 1; CAA57063." evidence="6" ref="1">
    <original>A</original>
    <variation>V</variation>
    <location>
        <position position="101"/>
    </location>
</feature>
<feature type="sequence conflict" description="In Ref. 1; CAA57063." evidence="6" ref="1">
    <original>R</original>
    <variation>C</variation>
    <location>
        <position position="122"/>
    </location>
</feature>
<gene>
    <name evidence="5" type="primary">gluD</name>
    <name type="ordered locus">Cgl1953</name>
    <name type="ordered locus">cg2139</name>
</gene>
<organism>
    <name type="scientific">Corynebacterium glutamicum (strain ATCC 13032 / DSM 20300 / JCM 1318 / BCRC 11384 / CCUG 27702 / LMG 3730 / NBRC 12168 / NCIMB 10025 / NRRL B-2784 / 534)</name>
    <dbReference type="NCBI Taxonomy" id="196627"/>
    <lineage>
        <taxon>Bacteria</taxon>
        <taxon>Bacillati</taxon>
        <taxon>Actinomycetota</taxon>
        <taxon>Actinomycetes</taxon>
        <taxon>Mycobacteriales</taxon>
        <taxon>Corynebacteriaceae</taxon>
        <taxon>Corynebacterium</taxon>
    </lineage>
</organism>
<comment type="function">
    <text evidence="4">Part of the ABC transporter complex GluABCD involved in glutamate uptake. Probably responsible for the translocation of the substrate across the membrane.</text>
</comment>
<comment type="subunit">
    <text evidence="7">The complex is composed of two ATP-binding proteins (GluA), two transmembrane proteins (GluC and GluD) and a solute-binding protein (GluB).</text>
</comment>
<comment type="subcellular location">
    <subcellularLocation>
        <location evidence="6">Cell membrane</location>
        <topology evidence="1">Multi-pass membrane protein</topology>
    </subcellularLocation>
</comment>
<comment type="disruption phenotype">
    <text evidence="4">Deletion of the gluABCD cluster almost abolishes glutamate uptake activity.</text>
</comment>
<comment type="similarity">
    <text evidence="6">Belongs to the binding-protein-dependent transport system permease family. HisMQ subfamily.</text>
</comment>
<comment type="sequence caution" evidence="6">
    <conflict type="erroneous initiation">
        <sequence resource="EMBL-CDS" id="CAF20294"/>
    </conflict>
</comment>
<sequence length="273" mass="29866">MLSGNGQLDANKWTPFINSQTWTTYILPGLWGTLKSAVFSVILALVMGTALGLGRISEIRILRWFCAVIIETFRAIPVLILMIFAYQMFAQYNIVPSSQLAFAAVVFGLTMYNGSVIAEILRSGIASLPKGQKEAAIALGMSSRQTTWSILLPQAVAAMLPALISQMVIALKDSALGYQIGYIEVVRSGIQSASVNRNYLAALFVVALIMIVLNFSLTALASRIERQLRAGRARKNIVAKVPEQPDQGLETKDNVNVDWQDPDYKDLKTPGVQ</sequence>
<keyword id="KW-0029">Amino-acid transport</keyword>
<keyword id="KW-1003">Cell membrane</keyword>
<keyword id="KW-0472">Membrane</keyword>
<keyword id="KW-1185">Reference proteome</keyword>
<keyword id="KW-0812">Transmembrane</keyword>
<keyword id="KW-1133">Transmembrane helix</keyword>
<keyword id="KW-0813">Transport</keyword>
<proteinExistence type="evidence at protein level"/>
<reference key="1">
    <citation type="journal article" date="1995" name="J. Bacteriol.">
        <title>Structure of the gluABCD cluster encoding the glutamate uptake system of Corynebacterium glutamicum.</title>
        <authorList>
            <person name="Kronemeyer W."/>
            <person name="Peekhaus N."/>
            <person name="Kraemer R."/>
            <person name="Sahm H."/>
            <person name="Eggeling L."/>
        </authorList>
    </citation>
    <scope>NUCLEOTIDE SEQUENCE [GENOMIC DNA]</scope>
    <scope>FUNCTION</scope>
    <scope>SUBUNIT</scope>
    <scope>DISRUPTION PHENOTYPE</scope>
    <source>
        <strain>ATCC 13032 / DSM 20300 / JCM 1318 / BCRC 11384 / CCUG 27702 / LMG 3730 / NBRC 12168 / NCIMB 10025 / NRRL B-2784 / 534</strain>
    </source>
</reference>
<reference key="2">
    <citation type="journal article" date="2003" name="Appl. Microbiol. Biotechnol.">
        <title>The Corynebacterium glutamicum genome: features and impacts on biotechnological processes.</title>
        <authorList>
            <person name="Ikeda M."/>
            <person name="Nakagawa S."/>
        </authorList>
    </citation>
    <scope>NUCLEOTIDE SEQUENCE [LARGE SCALE GENOMIC DNA]</scope>
    <source>
        <strain>ATCC 13032 / DSM 20300 / JCM 1318 / BCRC 11384 / CCUG 27702 / LMG 3730 / NBRC 12168 / NCIMB 10025 / NRRL B-2784 / 534</strain>
    </source>
</reference>
<reference key="3">
    <citation type="journal article" date="2003" name="J. Biotechnol.">
        <title>The complete Corynebacterium glutamicum ATCC 13032 genome sequence and its impact on the production of L-aspartate-derived amino acids and vitamins.</title>
        <authorList>
            <person name="Kalinowski J."/>
            <person name="Bathe B."/>
            <person name="Bartels D."/>
            <person name="Bischoff N."/>
            <person name="Bott M."/>
            <person name="Burkovski A."/>
            <person name="Dusch N."/>
            <person name="Eggeling L."/>
            <person name="Eikmanns B.J."/>
            <person name="Gaigalat L."/>
            <person name="Goesmann A."/>
            <person name="Hartmann M."/>
            <person name="Huthmacher K."/>
            <person name="Kraemer R."/>
            <person name="Linke B."/>
            <person name="McHardy A.C."/>
            <person name="Meyer F."/>
            <person name="Moeckel B."/>
            <person name="Pfefferle W."/>
            <person name="Puehler A."/>
            <person name="Rey D.A."/>
            <person name="Rueckert C."/>
            <person name="Rupp O."/>
            <person name="Sahm H."/>
            <person name="Wendisch V.F."/>
            <person name="Wiegraebe I."/>
            <person name="Tauch A."/>
        </authorList>
    </citation>
    <scope>NUCLEOTIDE SEQUENCE [LARGE SCALE GENOMIC DNA]</scope>
    <source>
        <strain>ATCC 13032 / DSM 20300 / JCM 1318 / BCRC 11384 / CCUG 27702 / LMG 3730 / NBRC 12168 / NCIMB 10025 / NRRL B-2784 / 534</strain>
    </source>
</reference>
<name>GLUD_CORGL</name>
<dbReference type="EMBL" id="X81191">
    <property type="protein sequence ID" value="CAA57063.1"/>
    <property type="molecule type" value="Genomic_DNA"/>
</dbReference>
<dbReference type="EMBL" id="BA000036">
    <property type="protein sequence ID" value="BAB99346.1"/>
    <property type="molecule type" value="Genomic_DNA"/>
</dbReference>
<dbReference type="EMBL" id="BX927153">
    <property type="protein sequence ID" value="CAF20294.1"/>
    <property type="status" value="ALT_INIT"/>
    <property type="molecule type" value="Genomic_DNA"/>
</dbReference>
<dbReference type="RefSeq" id="NP_601160.2">
    <property type="nucleotide sequence ID" value="NC_003450.3"/>
</dbReference>
<dbReference type="RefSeq" id="WP_011014781.1">
    <property type="nucleotide sequence ID" value="NC_006958.1"/>
</dbReference>
<dbReference type="SMR" id="P48245"/>
<dbReference type="STRING" id="196627.cg2139"/>
<dbReference type="TCDB" id="3.A.1.3.9">
    <property type="family name" value="the atp-binding cassette (abc) superfamily"/>
</dbReference>
<dbReference type="KEGG" id="cgb:cg2139"/>
<dbReference type="KEGG" id="cgl:Cgl1953"/>
<dbReference type="PATRIC" id="fig|196627.13.peg.1891"/>
<dbReference type="eggNOG" id="COG0765">
    <property type="taxonomic scope" value="Bacteria"/>
</dbReference>
<dbReference type="HOGENOM" id="CLU_019602_1_3_11"/>
<dbReference type="OrthoDB" id="4543034at2"/>
<dbReference type="BioCyc" id="CORYNE:G18NG-11545-MONOMER"/>
<dbReference type="Proteomes" id="UP000000582">
    <property type="component" value="Chromosome"/>
</dbReference>
<dbReference type="Proteomes" id="UP000001009">
    <property type="component" value="Chromosome"/>
</dbReference>
<dbReference type="GO" id="GO:0043190">
    <property type="term" value="C:ATP-binding cassette (ABC) transporter complex"/>
    <property type="evidence" value="ECO:0007669"/>
    <property type="project" value="InterPro"/>
</dbReference>
<dbReference type="GO" id="GO:0022857">
    <property type="term" value="F:transmembrane transporter activity"/>
    <property type="evidence" value="ECO:0007669"/>
    <property type="project" value="InterPro"/>
</dbReference>
<dbReference type="GO" id="GO:0006865">
    <property type="term" value="P:amino acid transport"/>
    <property type="evidence" value="ECO:0007669"/>
    <property type="project" value="UniProtKB-KW"/>
</dbReference>
<dbReference type="CDD" id="cd06261">
    <property type="entry name" value="TM_PBP2"/>
    <property type="match status" value="1"/>
</dbReference>
<dbReference type="Gene3D" id="1.10.3720.10">
    <property type="entry name" value="MetI-like"/>
    <property type="match status" value="1"/>
</dbReference>
<dbReference type="InterPro" id="IPR010065">
    <property type="entry name" value="AA_ABC_transptr_permease_3TM"/>
</dbReference>
<dbReference type="InterPro" id="IPR043429">
    <property type="entry name" value="ArtM/GltK/GlnP/TcyL/YhdX-like"/>
</dbReference>
<dbReference type="InterPro" id="IPR000515">
    <property type="entry name" value="MetI-like"/>
</dbReference>
<dbReference type="InterPro" id="IPR035906">
    <property type="entry name" value="MetI-like_sf"/>
</dbReference>
<dbReference type="NCBIfam" id="TIGR01726">
    <property type="entry name" value="HEQRo_perm_3TM"/>
    <property type="match status" value="1"/>
</dbReference>
<dbReference type="PANTHER" id="PTHR30614:SF21">
    <property type="entry name" value="AMINO ACID ABC TRANSPORTER PERMEASE"/>
    <property type="match status" value="1"/>
</dbReference>
<dbReference type="PANTHER" id="PTHR30614">
    <property type="entry name" value="MEMBRANE COMPONENT OF AMINO ACID ABC TRANSPORTER"/>
    <property type="match status" value="1"/>
</dbReference>
<dbReference type="Pfam" id="PF00528">
    <property type="entry name" value="BPD_transp_1"/>
    <property type="match status" value="1"/>
</dbReference>
<dbReference type="SUPFAM" id="SSF161098">
    <property type="entry name" value="MetI-like"/>
    <property type="match status" value="1"/>
</dbReference>
<dbReference type="PROSITE" id="PS50928">
    <property type="entry name" value="ABC_TM1"/>
    <property type="match status" value="1"/>
</dbReference>
<protein>
    <recommendedName>
        <fullName evidence="6">Glutamate transport system permease protein GluD</fullName>
    </recommendedName>
    <alternativeName>
        <fullName evidence="6">Glutamate uptake system protein GluD</fullName>
    </alternativeName>
</protein>